<keyword id="KW-0342">GTP-binding</keyword>
<keyword id="KW-0547">Nucleotide-binding</keyword>
<keyword id="KW-1185">Reference proteome</keyword>
<keyword id="KW-0677">Repeat</keyword>
<keyword id="KW-0690">Ribosome biogenesis</keyword>
<organism>
    <name type="scientific">Mycoplasmopsis agalactiae (strain NCTC 10123 / CIP 59.7 / PG2)</name>
    <name type="common">Mycoplasma agalactiae</name>
    <dbReference type="NCBI Taxonomy" id="347257"/>
    <lineage>
        <taxon>Bacteria</taxon>
        <taxon>Bacillati</taxon>
        <taxon>Mycoplasmatota</taxon>
        <taxon>Mycoplasmoidales</taxon>
        <taxon>Metamycoplasmataceae</taxon>
        <taxon>Mycoplasmopsis</taxon>
    </lineage>
</organism>
<name>DER_MYCAP</name>
<feature type="chain" id="PRO_1000099139" description="GTPase Der">
    <location>
        <begin position="1"/>
        <end position="436"/>
    </location>
</feature>
<feature type="domain" description="EngA-type G 1">
    <location>
        <begin position="4"/>
        <end position="165"/>
    </location>
</feature>
<feature type="domain" description="EngA-type G 2">
    <location>
        <begin position="172"/>
        <end position="347"/>
    </location>
</feature>
<feature type="domain" description="KH-like" evidence="1">
    <location>
        <begin position="348"/>
        <end position="432"/>
    </location>
</feature>
<feature type="binding site" evidence="1">
    <location>
        <begin position="10"/>
        <end position="17"/>
    </location>
    <ligand>
        <name>GTP</name>
        <dbReference type="ChEBI" id="CHEBI:37565"/>
        <label>1</label>
    </ligand>
</feature>
<feature type="binding site" evidence="1">
    <location>
        <begin position="57"/>
        <end position="61"/>
    </location>
    <ligand>
        <name>GTP</name>
        <dbReference type="ChEBI" id="CHEBI:37565"/>
        <label>1</label>
    </ligand>
</feature>
<feature type="binding site" evidence="1">
    <location>
        <begin position="119"/>
        <end position="122"/>
    </location>
    <ligand>
        <name>GTP</name>
        <dbReference type="ChEBI" id="CHEBI:37565"/>
        <label>1</label>
    </ligand>
</feature>
<feature type="binding site" evidence="1">
    <location>
        <begin position="178"/>
        <end position="185"/>
    </location>
    <ligand>
        <name>GTP</name>
        <dbReference type="ChEBI" id="CHEBI:37565"/>
        <label>2</label>
    </ligand>
</feature>
<feature type="binding site" evidence="1">
    <location>
        <begin position="225"/>
        <end position="229"/>
    </location>
    <ligand>
        <name>GTP</name>
        <dbReference type="ChEBI" id="CHEBI:37565"/>
        <label>2</label>
    </ligand>
</feature>
<feature type="binding site" evidence="1">
    <location>
        <begin position="290"/>
        <end position="293"/>
    </location>
    <ligand>
        <name>GTP</name>
        <dbReference type="ChEBI" id="CHEBI:37565"/>
        <label>2</label>
    </ligand>
</feature>
<comment type="function">
    <text evidence="1">GTPase that plays an essential role in the late steps of ribosome biogenesis.</text>
</comment>
<comment type="subunit">
    <text evidence="1">Associates with the 50S ribosomal subunit.</text>
</comment>
<comment type="similarity">
    <text evidence="1">Belongs to the TRAFAC class TrmE-Era-EngA-EngB-Septin-like GTPase superfamily. EngA (Der) GTPase family.</text>
</comment>
<sequence length="436" mass="49543">MKKNVIAIIGKPNVGKSTLFNRLVGKRSSITFDRPGVTRDRLYESFTWNGKEINVIDTGGIQIEKKDFQDQILIQAKIAIEEANVVIFIVDGQAAITSDDKMIYSMLQKSGKPIIVVANKLDNISKFDYGWYSLGADHVFRISALHGNGIGDVLDQCLKYLNFDSDNVSPYFKLSIIGQPNSGKSSLLNAITHENRSIVSDIAGTTRDGVKSVVELRGHKIEIIDTAGITRKSKIDDTVEHLALKRAMSSLDESDLSIVLINSTRELAHFDARIIGYALENNKPIIICVNKWDLINKTQDTMNEYRKKLKNRFHFVPWVPVEFISAKTGSRIDKLIDIVLKVKENLEREIKPSVLTNLIRESQLIQPAPPYNGGRLNIYFARKTENKIPTFIFFVNNKKFVHFSYQRFLEKQIRQNIEYTGCPINIIFKNKSNEFE</sequence>
<reference key="1">
    <citation type="journal article" date="2007" name="PLoS Genet.">
        <title>Being pathogenic, plastic, and sexual while living with a nearly minimal bacterial genome.</title>
        <authorList>
            <person name="Sirand-Pugnet P."/>
            <person name="Lartigue C."/>
            <person name="Marenda M."/>
            <person name="Jacob D."/>
            <person name="Barre A."/>
            <person name="Barbe V."/>
            <person name="Schenowitz C."/>
            <person name="Mangenot S."/>
            <person name="Couloux A."/>
            <person name="Segurens B."/>
            <person name="de Daruvar A."/>
            <person name="Blanchard A."/>
            <person name="Citti C."/>
        </authorList>
    </citation>
    <scope>NUCLEOTIDE SEQUENCE [LARGE SCALE GENOMIC DNA]</scope>
    <source>
        <strain>NCTC 10123 / CIP 59.7 / PG2</strain>
    </source>
</reference>
<dbReference type="EMBL" id="CU179680">
    <property type="protein sequence ID" value="CAL59424.1"/>
    <property type="molecule type" value="Genomic_DNA"/>
</dbReference>
<dbReference type="RefSeq" id="WP_011949877.1">
    <property type="nucleotide sequence ID" value="NC_009497.1"/>
</dbReference>
<dbReference type="SMR" id="A5IZG5"/>
<dbReference type="STRING" id="347257.MAG7240"/>
<dbReference type="GeneID" id="93358449"/>
<dbReference type="KEGG" id="maa:MAG7240"/>
<dbReference type="HOGENOM" id="CLU_016077_6_2_14"/>
<dbReference type="Proteomes" id="UP000007065">
    <property type="component" value="Chromosome"/>
</dbReference>
<dbReference type="GO" id="GO:0005525">
    <property type="term" value="F:GTP binding"/>
    <property type="evidence" value="ECO:0007669"/>
    <property type="project" value="UniProtKB-UniRule"/>
</dbReference>
<dbReference type="GO" id="GO:0043022">
    <property type="term" value="F:ribosome binding"/>
    <property type="evidence" value="ECO:0007669"/>
    <property type="project" value="TreeGrafter"/>
</dbReference>
<dbReference type="GO" id="GO:0042254">
    <property type="term" value="P:ribosome biogenesis"/>
    <property type="evidence" value="ECO:0007669"/>
    <property type="project" value="UniProtKB-KW"/>
</dbReference>
<dbReference type="CDD" id="cd01894">
    <property type="entry name" value="EngA1"/>
    <property type="match status" value="1"/>
</dbReference>
<dbReference type="CDD" id="cd01895">
    <property type="entry name" value="EngA2"/>
    <property type="match status" value="1"/>
</dbReference>
<dbReference type="FunFam" id="3.40.50.300:FF:000040">
    <property type="entry name" value="GTPase Der"/>
    <property type="match status" value="1"/>
</dbReference>
<dbReference type="Gene3D" id="3.30.300.20">
    <property type="match status" value="1"/>
</dbReference>
<dbReference type="Gene3D" id="3.40.50.300">
    <property type="entry name" value="P-loop containing nucleotide triphosphate hydrolases"/>
    <property type="match status" value="2"/>
</dbReference>
<dbReference type="HAMAP" id="MF_00195">
    <property type="entry name" value="GTPase_Der"/>
    <property type="match status" value="1"/>
</dbReference>
<dbReference type="InterPro" id="IPR031166">
    <property type="entry name" value="G_ENGA"/>
</dbReference>
<dbReference type="InterPro" id="IPR006073">
    <property type="entry name" value="GTP-bd"/>
</dbReference>
<dbReference type="InterPro" id="IPR016484">
    <property type="entry name" value="GTPase_Der"/>
</dbReference>
<dbReference type="InterPro" id="IPR032859">
    <property type="entry name" value="KH_dom-like"/>
</dbReference>
<dbReference type="InterPro" id="IPR015946">
    <property type="entry name" value="KH_dom-like_a/b"/>
</dbReference>
<dbReference type="InterPro" id="IPR027417">
    <property type="entry name" value="P-loop_NTPase"/>
</dbReference>
<dbReference type="InterPro" id="IPR005225">
    <property type="entry name" value="Small_GTP-bd"/>
</dbReference>
<dbReference type="NCBIfam" id="TIGR03594">
    <property type="entry name" value="GTPase_EngA"/>
    <property type="match status" value="1"/>
</dbReference>
<dbReference type="NCBIfam" id="TIGR00231">
    <property type="entry name" value="small_GTP"/>
    <property type="match status" value="2"/>
</dbReference>
<dbReference type="PANTHER" id="PTHR43834">
    <property type="entry name" value="GTPASE DER"/>
    <property type="match status" value="1"/>
</dbReference>
<dbReference type="PANTHER" id="PTHR43834:SF6">
    <property type="entry name" value="GTPASE DER"/>
    <property type="match status" value="1"/>
</dbReference>
<dbReference type="Pfam" id="PF14714">
    <property type="entry name" value="KH_dom-like"/>
    <property type="match status" value="1"/>
</dbReference>
<dbReference type="Pfam" id="PF01926">
    <property type="entry name" value="MMR_HSR1"/>
    <property type="match status" value="2"/>
</dbReference>
<dbReference type="PIRSF" id="PIRSF006485">
    <property type="entry name" value="GTP-binding_EngA"/>
    <property type="match status" value="1"/>
</dbReference>
<dbReference type="PRINTS" id="PR00449">
    <property type="entry name" value="RASTRNSFRMNG"/>
</dbReference>
<dbReference type="SMART" id="SM00173">
    <property type="entry name" value="RAS"/>
    <property type="match status" value="1"/>
</dbReference>
<dbReference type="SUPFAM" id="SSF52540">
    <property type="entry name" value="P-loop containing nucleoside triphosphate hydrolases"/>
    <property type="match status" value="2"/>
</dbReference>
<dbReference type="PROSITE" id="PS51712">
    <property type="entry name" value="G_ENGA"/>
    <property type="match status" value="2"/>
</dbReference>
<protein>
    <recommendedName>
        <fullName evidence="1">GTPase Der</fullName>
    </recommendedName>
    <alternativeName>
        <fullName evidence="1">GTP-binding protein EngA</fullName>
    </alternativeName>
</protein>
<evidence type="ECO:0000255" key="1">
    <source>
        <dbReference type="HAMAP-Rule" id="MF_00195"/>
    </source>
</evidence>
<gene>
    <name evidence="1" type="primary">der</name>
    <name type="synonym">engA</name>
    <name type="ordered locus">MAG7240</name>
</gene>
<proteinExistence type="inferred from homology"/>
<accession>A5IZG5</accession>